<proteinExistence type="evidence at transcript level"/>
<reference key="1">
    <citation type="journal article" date="2006" name="Anim. Biotechnol.">
        <title>Sequence identification, tissue distribution, mapping and polymorphism of the porcine sar1b gene.</title>
        <authorList>
            <person name="Wang X.M."/>
            <person name="Liu B."/>
            <person name="Zhao S.H."/>
            <person name="Fan B."/>
            <person name="Zhu M.J."/>
            <person name="Yu M."/>
            <person name="Xiong T.A."/>
            <person name="Li K."/>
        </authorList>
    </citation>
    <scope>NUCLEOTIDE SEQUENCE [MRNA]</scope>
</reference>
<reference key="2">
    <citation type="submission" date="2005-04" db="EMBL/GenBank/DDBJ databases">
        <authorList>
            <person name="Liu G.Y."/>
            <person name="Xiong Z.Y."/>
        </authorList>
    </citation>
    <scope>NUCLEOTIDE SEQUENCE [LARGE SCALE MRNA]</scope>
</reference>
<comment type="function">
    <text evidence="2">Small GTPase that cycles between an active GTP-bound and an inactive GDP-bound state and mainly functions in vesicle-mediated endoplasmic reticulum (ER) to Golgi transport. The active GTP-bound form inserts into the endoplasmic reticulum membrane where it recruits the remainder of the coat protein complex II/COPII. The coat protein complex II assembling and polymerizing on endoplasmic reticulum membrane is responsible for both the sorting of cargos and the deformation and budding of membranes into vesicles destined to the Golgi. In contrast to SAR1A, SAR1B specifically interacts with the cargo receptor SURF4 to mediate the transport of lipid-carrying lipoproteins including APOB and APOA1 from the endoplasmic reticulum to the Golgi and thereby, indirectly regulates lipid homeostasis. In addition to its role in vesicle trafficking, can also function as a leucine sensor regulating TORC1 signaling and more indirectly cellular metabolism, growth and survival. In absence of leucine, interacts with the GATOR2 complex via MIOS and inhibits TORC1 signaling. The binding of leucine abrogates the interaction with GATOR2 and the inhibition of the TORC1 signaling. This function is completely independent of the GTPase activity of SAR1B.</text>
</comment>
<comment type="catalytic activity">
    <reaction evidence="2">
        <text>GTP + H2O = GDP + phosphate + H(+)</text>
        <dbReference type="Rhea" id="RHEA:19669"/>
        <dbReference type="ChEBI" id="CHEBI:15377"/>
        <dbReference type="ChEBI" id="CHEBI:15378"/>
        <dbReference type="ChEBI" id="CHEBI:37565"/>
        <dbReference type="ChEBI" id="CHEBI:43474"/>
        <dbReference type="ChEBI" id="CHEBI:58189"/>
        <dbReference type="EC" id="3.6.5.2"/>
    </reaction>
    <physiologicalReaction direction="left-to-right" evidence="2">
        <dbReference type="Rhea" id="RHEA:19670"/>
    </physiologicalReaction>
</comment>
<comment type="activity regulation">
    <text evidence="1 2">Small GTPases activation is mediated by guanine exchange factors (GEF), while inactivation through hydrolysis of the bound GTP is stimulated by GTPase activating proteins (GAP) (By similarity). Activated by the guanine nucleotide exchange factor PREB/SEC12 that facilitates the loading of SAR1B with GTP (By similarity). GTP hydrolysis is stimulated by SEC23/24 (By similarity).</text>
</comment>
<comment type="subunit">
    <text evidence="2">Homodimer; upon association with membrane. Part of the coat protein complex II/COPII, composed of SEC23/24 and SEC13/31 heterodimers, that it helps recruit and assemble on endoplasmic reticulum (ER) membranes at ER exit site. Interacts with PREB; PREB acts as a guanine nucleotide exchange factor facilitating the activation of SAR1B by loading it with GTP. Interacts with SURF4; recruits the cargo receptor SURF4 and its lipoprotein cargos to COPII-coated ER to Golgi transport vesicles. Interacts with MIOS; the interaction is direct, disrupted by the binding of leucine and mediates the interaction of SAR1B with the GATOR2 complex to negatively regulate the TORC1 signaling upon leucine deprivation.</text>
</comment>
<comment type="subcellular location">
    <subcellularLocation>
        <location evidence="2">Endoplasmic reticulum membrane</location>
        <topology evidence="1">Peripheral membrane protein</topology>
    </subcellularLocation>
    <subcellularLocation>
        <location evidence="1">Golgi apparatus</location>
        <location evidence="1">Golgi stack membrane</location>
        <topology evidence="1">Peripheral membrane protein</topology>
    </subcellularLocation>
    <subcellularLocation>
        <location evidence="2">Cytoplasm</location>
        <location evidence="2">Cytosol</location>
    </subcellularLocation>
    <subcellularLocation>
        <location evidence="2">Lysosome membrane</location>
    </subcellularLocation>
    <text evidence="2">Active at endoplasmic reticulum exit sites (ERES) where it inserts into the membrane and recruits the remainder of the coat protein complex II/COPII. Upon leucine deprivation, associates with lysosomal membranes to repress TORC1 signaling.</text>
</comment>
<comment type="similarity">
    <text evidence="4">Belongs to the small GTPase superfamily. SAR1 family.</text>
</comment>
<evidence type="ECO:0000250" key="1">
    <source>
        <dbReference type="UniProtKB" id="Q9QVY3"/>
    </source>
</evidence>
<evidence type="ECO:0000250" key="2">
    <source>
        <dbReference type="UniProtKB" id="Q9Y6B6"/>
    </source>
</evidence>
<evidence type="ECO:0000303" key="3">
    <source>
    </source>
</evidence>
<evidence type="ECO:0000305" key="4"/>
<gene>
    <name evidence="3" type="primary">SAR1B</name>
</gene>
<sequence>MSFIFDWIYSGFSSVLQFLGLYKKTGKLVFLGLDNAGKTTLLHMLKDDRLGQHVPTLHPTSEELTIAGMTFTTFDLGGHVQARRVWKNYLPAINGIVFLVDCADHERLLESKEELDSLMTDETVANVPILILGNKIDRPEAISEERLREMFGLYGQTTGKGSVSLKELNARPLEVFMCSVLKRQGYGEGFRWMAQYID</sequence>
<feature type="chain" id="PRO_0000249778" description="Small COPII coat GTPase SAR1B">
    <location>
        <begin position="1"/>
        <end position="198"/>
    </location>
</feature>
<feature type="region of interest" description="Mediates recruitment to ER membranes" evidence="1">
    <location>
        <begin position="15"/>
        <end position="19"/>
    </location>
</feature>
<feature type="short sequence motif" description="STAR; SAR1-N-terminal activation recruitment. Required for the activation by PREB and subsequent recruitment to ER membrane" evidence="1">
    <location>
        <begin position="3"/>
        <end position="5"/>
    </location>
</feature>
<feature type="binding site" evidence="2">
    <location>
        <position position="34"/>
    </location>
    <ligand>
        <name>Mg(2+)</name>
        <dbReference type="ChEBI" id="CHEBI:18420"/>
    </ligand>
</feature>
<feature type="binding site" evidence="2">
    <location>
        <position position="35"/>
    </location>
    <ligand>
        <name>GDP</name>
        <dbReference type="ChEBI" id="CHEBI:58189"/>
    </ligand>
</feature>
<feature type="binding site" evidence="2">
    <location>
        <position position="35"/>
    </location>
    <ligand>
        <name>GTP</name>
        <dbReference type="ChEBI" id="CHEBI:37565"/>
    </ligand>
</feature>
<feature type="binding site" evidence="2">
    <location>
        <position position="36"/>
    </location>
    <ligand>
        <name>GDP</name>
        <dbReference type="ChEBI" id="CHEBI:58189"/>
    </ligand>
</feature>
<feature type="binding site" evidence="2">
    <location>
        <position position="37"/>
    </location>
    <ligand>
        <name>GDP</name>
        <dbReference type="ChEBI" id="CHEBI:58189"/>
    </ligand>
</feature>
<feature type="binding site" evidence="2">
    <location>
        <position position="37"/>
    </location>
    <ligand>
        <name>GTP</name>
        <dbReference type="ChEBI" id="CHEBI:37565"/>
    </ligand>
</feature>
<feature type="binding site" evidence="2">
    <location>
        <position position="38"/>
    </location>
    <ligand>
        <name>GDP</name>
        <dbReference type="ChEBI" id="CHEBI:58189"/>
    </ligand>
</feature>
<feature type="binding site" evidence="2">
    <location>
        <position position="38"/>
    </location>
    <ligand>
        <name>GTP</name>
        <dbReference type="ChEBI" id="CHEBI:37565"/>
    </ligand>
</feature>
<feature type="binding site" evidence="2">
    <location>
        <position position="39"/>
    </location>
    <ligand>
        <name>GDP</name>
        <dbReference type="ChEBI" id="CHEBI:58189"/>
    </ligand>
</feature>
<feature type="binding site" evidence="2">
    <location>
        <position position="39"/>
    </location>
    <ligand>
        <name>GTP</name>
        <dbReference type="ChEBI" id="CHEBI:37565"/>
    </ligand>
</feature>
<feature type="binding site" evidence="2">
    <location>
        <position position="40"/>
    </location>
    <ligand>
        <name>GDP</name>
        <dbReference type="ChEBI" id="CHEBI:58189"/>
    </ligand>
</feature>
<feature type="binding site" evidence="2">
    <location>
        <position position="40"/>
    </location>
    <ligand>
        <name>GTP</name>
        <dbReference type="ChEBI" id="CHEBI:37565"/>
    </ligand>
</feature>
<feature type="binding site" evidence="2">
    <location>
        <position position="58"/>
    </location>
    <ligand>
        <name>GDP</name>
        <dbReference type="ChEBI" id="CHEBI:58189"/>
    </ligand>
</feature>
<feature type="binding site" evidence="2">
    <location>
        <position position="75"/>
    </location>
    <ligand>
        <name>Mg(2+)</name>
        <dbReference type="ChEBI" id="CHEBI:18420"/>
    </ligand>
</feature>
<feature type="binding site" evidence="2">
    <location>
        <position position="134"/>
    </location>
    <ligand>
        <name>GDP</name>
        <dbReference type="ChEBI" id="CHEBI:58189"/>
    </ligand>
</feature>
<feature type="binding site" evidence="2">
    <location>
        <position position="134"/>
    </location>
    <ligand>
        <name>GTP</name>
        <dbReference type="ChEBI" id="CHEBI:37565"/>
    </ligand>
</feature>
<feature type="binding site" evidence="2">
    <location>
        <position position="135"/>
    </location>
    <ligand>
        <name>GDP</name>
        <dbReference type="ChEBI" id="CHEBI:58189"/>
    </ligand>
</feature>
<feature type="binding site" evidence="2">
    <location>
        <position position="135"/>
    </location>
    <ligand>
        <name>GTP</name>
        <dbReference type="ChEBI" id="CHEBI:37565"/>
    </ligand>
</feature>
<feature type="binding site" evidence="2">
    <location>
        <position position="137"/>
    </location>
    <ligand>
        <name>GDP</name>
        <dbReference type="ChEBI" id="CHEBI:58189"/>
    </ligand>
</feature>
<feature type="binding site" evidence="2">
    <location>
        <position position="137"/>
    </location>
    <ligand>
        <name>GTP</name>
        <dbReference type="ChEBI" id="CHEBI:37565"/>
    </ligand>
</feature>
<feature type="binding site" evidence="2">
    <location>
        <position position="180"/>
    </location>
    <ligand>
        <name>GDP</name>
        <dbReference type="ChEBI" id="CHEBI:58189"/>
    </ligand>
</feature>
<feature type="binding site" evidence="2">
    <location>
        <position position="180"/>
    </location>
    <ligand>
        <name>GTP</name>
        <dbReference type="ChEBI" id="CHEBI:37565"/>
    </ligand>
</feature>
<feature type="binding site" evidence="2">
    <location>
        <position position="181"/>
    </location>
    <ligand>
        <name>GDP</name>
        <dbReference type="ChEBI" id="CHEBI:58189"/>
    </ligand>
</feature>
<feature type="binding site" evidence="2">
    <location>
        <position position="181"/>
    </location>
    <ligand>
        <name>GTP</name>
        <dbReference type="ChEBI" id="CHEBI:37565"/>
    </ligand>
</feature>
<feature type="modified residue" description="Phosphoserine" evidence="2">
    <location>
        <position position="164"/>
    </location>
</feature>
<feature type="sequence conflict" description="In Ref. 2; AAY23007." evidence="4" ref="2">
    <original>I</original>
    <variation>V</variation>
    <location>
        <position position="93"/>
    </location>
</feature>
<keyword id="KW-0963">Cytoplasm</keyword>
<keyword id="KW-0256">Endoplasmic reticulum</keyword>
<keyword id="KW-0931">ER-Golgi transport</keyword>
<keyword id="KW-0333">Golgi apparatus</keyword>
<keyword id="KW-0342">GTP-binding</keyword>
<keyword id="KW-0378">Hydrolase</keyword>
<keyword id="KW-0458">Lysosome</keyword>
<keyword id="KW-0460">Magnesium</keyword>
<keyword id="KW-0472">Membrane</keyword>
<keyword id="KW-0479">Metal-binding</keyword>
<keyword id="KW-0547">Nucleotide-binding</keyword>
<keyword id="KW-0597">Phosphoprotein</keyword>
<keyword id="KW-0653">Protein transport</keyword>
<keyword id="KW-1185">Reference proteome</keyword>
<keyword id="KW-0813">Transport</keyword>
<accession>Q5PYH3</accession>
<accession>Q4ZJK0</accession>
<organism>
    <name type="scientific">Sus scrofa</name>
    <name type="common">Pig</name>
    <dbReference type="NCBI Taxonomy" id="9823"/>
    <lineage>
        <taxon>Eukaryota</taxon>
        <taxon>Metazoa</taxon>
        <taxon>Chordata</taxon>
        <taxon>Craniata</taxon>
        <taxon>Vertebrata</taxon>
        <taxon>Euteleostomi</taxon>
        <taxon>Mammalia</taxon>
        <taxon>Eutheria</taxon>
        <taxon>Laurasiatheria</taxon>
        <taxon>Artiodactyla</taxon>
        <taxon>Suina</taxon>
        <taxon>Suidae</taxon>
        <taxon>Sus</taxon>
    </lineage>
</organism>
<protein>
    <recommendedName>
        <fullName evidence="2">Small COPII coat GTPase SAR1B</fullName>
        <ecNumber evidence="2">3.6.5.2</ecNumber>
    </recommendedName>
</protein>
<name>SAR1B_PIG</name>
<dbReference type="EC" id="3.6.5.2" evidence="2"/>
<dbReference type="EMBL" id="AY819557">
    <property type="protein sequence ID" value="AAV68380.1"/>
    <property type="molecule type" value="mRNA"/>
</dbReference>
<dbReference type="EMBL" id="DQ002890">
    <property type="protein sequence ID" value="AAY23007.1"/>
    <property type="molecule type" value="mRNA"/>
</dbReference>
<dbReference type="RefSeq" id="NP_001008689.1">
    <property type="nucleotide sequence ID" value="NM_001008689.2"/>
</dbReference>
<dbReference type="SMR" id="Q5PYH3"/>
<dbReference type="FunCoup" id="Q5PYH3">
    <property type="interactions" value="1957"/>
</dbReference>
<dbReference type="STRING" id="9823.ENSSSCP00000042292"/>
<dbReference type="PaxDb" id="9823-ENSSSCP00000015216"/>
<dbReference type="PeptideAtlas" id="Q5PYH3"/>
<dbReference type="Ensembl" id="ENSSSCT00000054541.3">
    <property type="protein sequence ID" value="ENSSSCP00000042292.1"/>
    <property type="gene ID" value="ENSSSCG00000014305.5"/>
</dbReference>
<dbReference type="Ensembl" id="ENSSSCT00015033357.1">
    <property type="protein sequence ID" value="ENSSSCP00015013273.1"/>
    <property type="gene ID" value="ENSSSCG00015024942.1"/>
</dbReference>
<dbReference type="Ensembl" id="ENSSSCT00025064988.1">
    <property type="protein sequence ID" value="ENSSSCP00025027689.1"/>
    <property type="gene ID" value="ENSSSCG00025047696.1"/>
</dbReference>
<dbReference type="Ensembl" id="ENSSSCT00030006806.1">
    <property type="protein sequence ID" value="ENSSSCP00030003035.1"/>
    <property type="gene ID" value="ENSSSCG00030005005.1"/>
</dbReference>
<dbReference type="Ensembl" id="ENSSSCT00035072599.1">
    <property type="protein sequence ID" value="ENSSSCP00035029456.1"/>
    <property type="gene ID" value="ENSSSCG00035054397.1"/>
</dbReference>
<dbReference type="Ensembl" id="ENSSSCT00040018980.1">
    <property type="protein sequence ID" value="ENSSSCP00040007789.1"/>
    <property type="gene ID" value="ENSSSCG00040014173.1"/>
</dbReference>
<dbReference type="Ensembl" id="ENSSSCT00045025809.1">
    <property type="protein sequence ID" value="ENSSSCP00045017804.1"/>
    <property type="gene ID" value="ENSSSCG00045015205.1"/>
</dbReference>
<dbReference type="Ensembl" id="ENSSSCT00050106063.1">
    <property type="protein sequence ID" value="ENSSSCP00050046787.1"/>
    <property type="gene ID" value="ENSSSCG00050077089.1"/>
</dbReference>
<dbReference type="Ensembl" id="ENSSSCT00055022089.1">
    <property type="protein sequence ID" value="ENSSSCP00055017491.1"/>
    <property type="gene ID" value="ENSSSCG00055011242.1"/>
</dbReference>
<dbReference type="Ensembl" id="ENSSSCT00060060360.1">
    <property type="protein sequence ID" value="ENSSSCP00060025866.1"/>
    <property type="gene ID" value="ENSSSCG00060044503.1"/>
</dbReference>
<dbReference type="Ensembl" id="ENSSSCT00065078006.1">
    <property type="protein sequence ID" value="ENSSSCP00065033914.1"/>
    <property type="gene ID" value="ENSSSCG00065056983.1"/>
</dbReference>
<dbReference type="Ensembl" id="ENSSSCT00065078015.1">
    <property type="protein sequence ID" value="ENSSSCP00065033921.1"/>
    <property type="gene ID" value="ENSSSCG00065056983.1"/>
</dbReference>
<dbReference type="Ensembl" id="ENSSSCT00070041701.1">
    <property type="protein sequence ID" value="ENSSSCP00070035012.1"/>
    <property type="gene ID" value="ENSSSCG00070020976.1"/>
</dbReference>
<dbReference type="Ensembl" id="ENSSSCT00070041710.1">
    <property type="protein sequence ID" value="ENSSSCP00070035021.1"/>
    <property type="gene ID" value="ENSSSCG00070020976.1"/>
</dbReference>
<dbReference type="Ensembl" id="ENSSSCT00105051988">
    <property type="protein sequence ID" value="ENSSSCP00105036579"/>
    <property type="gene ID" value="ENSSSCG00105027353"/>
</dbReference>
<dbReference type="Ensembl" id="ENSSSCT00110017432">
    <property type="protein sequence ID" value="ENSSSCP00110011956"/>
    <property type="gene ID" value="ENSSSCG00110009051"/>
</dbReference>
<dbReference type="Ensembl" id="ENSSSCT00115026048">
    <property type="protein sequence ID" value="ENSSSCP00115024674"/>
    <property type="gene ID" value="ENSSSCG00115015003"/>
</dbReference>
<dbReference type="GeneID" id="494017"/>
<dbReference type="KEGG" id="ssc:494017"/>
<dbReference type="CTD" id="51128"/>
<dbReference type="VGNC" id="VGNC:92580">
    <property type="gene designation" value="SAR1B"/>
</dbReference>
<dbReference type="eggNOG" id="KOG0077">
    <property type="taxonomic scope" value="Eukaryota"/>
</dbReference>
<dbReference type="GeneTree" id="ENSGT00940000160154"/>
<dbReference type="HOGENOM" id="CLU_040729_6_0_1"/>
<dbReference type="InParanoid" id="Q5PYH3"/>
<dbReference type="OMA" id="DCADYER"/>
<dbReference type="OrthoDB" id="49016at2759"/>
<dbReference type="TreeFam" id="TF312890"/>
<dbReference type="Reactome" id="R-SSC-204005">
    <property type="pathway name" value="COPII-mediated vesicle transport"/>
</dbReference>
<dbReference type="Reactome" id="R-SSC-2132295">
    <property type="pathway name" value="MHC class II antigen presentation"/>
</dbReference>
<dbReference type="Reactome" id="R-SSC-5694530">
    <property type="pathway name" value="Cargo concentration in the ER"/>
</dbReference>
<dbReference type="Reactome" id="R-SSC-8963888">
    <property type="pathway name" value="Chylomicron assembly"/>
</dbReference>
<dbReference type="Reactome" id="R-SSC-983170">
    <property type="pathway name" value="Antigen Presentation: Folding, assembly and peptide loading of class I MHC"/>
</dbReference>
<dbReference type="Proteomes" id="UP000008227">
    <property type="component" value="Chromosome 2"/>
</dbReference>
<dbReference type="Proteomes" id="UP000314985">
    <property type="component" value="Chromosome 2"/>
</dbReference>
<dbReference type="Proteomes" id="UP000694570">
    <property type="component" value="Unplaced"/>
</dbReference>
<dbReference type="Proteomes" id="UP000694571">
    <property type="component" value="Unplaced"/>
</dbReference>
<dbReference type="Proteomes" id="UP000694720">
    <property type="component" value="Unplaced"/>
</dbReference>
<dbReference type="Proteomes" id="UP000694722">
    <property type="component" value="Unplaced"/>
</dbReference>
<dbReference type="Proteomes" id="UP000694723">
    <property type="component" value="Unplaced"/>
</dbReference>
<dbReference type="Proteomes" id="UP000694724">
    <property type="component" value="Unplaced"/>
</dbReference>
<dbReference type="Proteomes" id="UP000694725">
    <property type="component" value="Unplaced"/>
</dbReference>
<dbReference type="Proteomes" id="UP000694726">
    <property type="component" value="Unplaced"/>
</dbReference>
<dbReference type="Proteomes" id="UP000694727">
    <property type="component" value="Unplaced"/>
</dbReference>
<dbReference type="Proteomes" id="UP000694728">
    <property type="component" value="Unplaced"/>
</dbReference>
<dbReference type="Bgee" id="ENSSSCG00000014305">
    <property type="expression patterns" value="Expressed in muscle tissue and 44 other cell types or tissues"/>
</dbReference>
<dbReference type="ExpressionAtlas" id="Q5PYH3">
    <property type="expression patterns" value="baseline and differential"/>
</dbReference>
<dbReference type="GO" id="GO:0030127">
    <property type="term" value="C:COPII vesicle coat"/>
    <property type="evidence" value="ECO:0000250"/>
    <property type="project" value="UniProtKB"/>
</dbReference>
<dbReference type="GO" id="GO:0005829">
    <property type="term" value="C:cytosol"/>
    <property type="evidence" value="ECO:0007669"/>
    <property type="project" value="UniProtKB-SubCell"/>
</dbReference>
<dbReference type="GO" id="GO:0070971">
    <property type="term" value="C:endoplasmic reticulum exit site"/>
    <property type="evidence" value="ECO:0000250"/>
    <property type="project" value="UniProtKB"/>
</dbReference>
<dbReference type="GO" id="GO:0005789">
    <property type="term" value="C:endoplasmic reticulum membrane"/>
    <property type="evidence" value="ECO:0007669"/>
    <property type="project" value="UniProtKB-SubCell"/>
</dbReference>
<dbReference type="GO" id="GO:0032580">
    <property type="term" value="C:Golgi cisterna membrane"/>
    <property type="evidence" value="ECO:0007669"/>
    <property type="project" value="UniProtKB-SubCell"/>
</dbReference>
<dbReference type="GO" id="GO:0005765">
    <property type="term" value="C:lysosomal membrane"/>
    <property type="evidence" value="ECO:0007669"/>
    <property type="project" value="UniProtKB-SubCell"/>
</dbReference>
<dbReference type="GO" id="GO:0140785">
    <property type="term" value="F:amino acid sensor activity"/>
    <property type="evidence" value="ECO:0007669"/>
    <property type="project" value="Ensembl"/>
</dbReference>
<dbReference type="GO" id="GO:0003925">
    <property type="term" value="F:G protein activity"/>
    <property type="evidence" value="ECO:0000250"/>
    <property type="project" value="UniProtKB"/>
</dbReference>
<dbReference type="GO" id="GO:0005525">
    <property type="term" value="F:GTP binding"/>
    <property type="evidence" value="ECO:0007669"/>
    <property type="project" value="UniProtKB-KW"/>
</dbReference>
<dbReference type="GO" id="GO:0003924">
    <property type="term" value="F:GTPase activity"/>
    <property type="evidence" value="ECO:0000318"/>
    <property type="project" value="GO_Central"/>
</dbReference>
<dbReference type="GO" id="GO:0046872">
    <property type="term" value="F:metal ion binding"/>
    <property type="evidence" value="ECO:0007669"/>
    <property type="project" value="UniProtKB-KW"/>
</dbReference>
<dbReference type="GO" id="GO:1990253">
    <property type="term" value="P:cellular response to leucine starvation"/>
    <property type="evidence" value="ECO:0007669"/>
    <property type="project" value="Ensembl"/>
</dbReference>
<dbReference type="GO" id="GO:0048208">
    <property type="term" value="P:COPII vesicle coating"/>
    <property type="evidence" value="ECO:0000250"/>
    <property type="project" value="UniProtKB"/>
</dbReference>
<dbReference type="GO" id="GO:0090110">
    <property type="term" value="P:COPII-coated vesicle cargo loading"/>
    <property type="evidence" value="ECO:0000250"/>
    <property type="project" value="UniProtKB"/>
</dbReference>
<dbReference type="GO" id="GO:0006888">
    <property type="term" value="P:endoplasmic reticulum to Golgi vesicle-mediated transport"/>
    <property type="evidence" value="ECO:0000250"/>
    <property type="project" value="UniProtKB"/>
</dbReference>
<dbReference type="GO" id="GO:0006886">
    <property type="term" value="P:intracellular protein transport"/>
    <property type="evidence" value="ECO:0007669"/>
    <property type="project" value="InterPro"/>
</dbReference>
<dbReference type="GO" id="GO:0140353">
    <property type="term" value="P:lipid export from cell"/>
    <property type="evidence" value="ECO:0007669"/>
    <property type="project" value="Ensembl"/>
</dbReference>
<dbReference type="GO" id="GO:0055088">
    <property type="term" value="P:lipid homeostasis"/>
    <property type="evidence" value="ECO:0000250"/>
    <property type="project" value="UniProtKB"/>
</dbReference>
<dbReference type="GO" id="GO:0042953">
    <property type="term" value="P:lipoprotein transport"/>
    <property type="evidence" value="ECO:0000250"/>
    <property type="project" value="UniProtKB"/>
</dbReference>
<dbReference type="GO" id="GO:0061024">
    <property type="term" value="P:membrane organization"/>
    <property type="evidence" value="ECO:0000318"/>
    <property type="project" value="GO_Central"/>
</dbReference>
<dbReference type="GO" id="GO:1904262">
    <property type="term" value="P:negative regulation of TORC1 signaling"/>
    <property type="evidence" value="ECO:0007669"/>
    <property type="project" value="Ensembl"/>
</dbReference>
<dbReference type="GO" id="GO:0003400">
    <property type="term" value="P:regulation of COPII vesicle coating"/>
    <property type="evidence" value="ECO:0000318"/>
    <property type="project" value="GO_Central"/>
</dbReference>
<dbReference type="GO" id="GO:0032368">
    <property type="term" value="P:regulation of lipid transport"/>
    <property type="evidence" value="ECO:0000250"/>
    <property type="project" value="UniProtKB"/>
</dbReference>
<dbReference type="GO" id="GO:0016050">
    <property type="term" value="P:vesicle organization"/>
    <property type="evidence" value="ECO:0000318"/>
    <property type="project" value="GO_Central"/>
</dbReference>
<dbReference type="CDD" id="cd00879">
    <property type="entry name" value="Sar1"/>
    <property type="match status" value="1"/>
</dbReference>
<dbReference type="FunFam" id="3.40.50.300:FF:000161">
    <property type="entry name" value="Small COPII coat GTPase"/>
    <property type="match status" value="1"/>
</dbReference>
<dbReference type="Gene3D" id="3.40.50.300">
    <property type="entry name" value="P-loop containing nucleotide triphosphate hydrolases"/>
    <property type="match status" value="1"/>
</dbReference>
<dbReference type="InterPro" id="IPR027417">
    <property type="entry name" value="P-loop_NTPase"/>
</dbReference>
<dbReference type="InterPro" id="IPR005225">
    <property type="entry name" value="Small_GTP-bd"/>
</dbReference>
<dbReference type="InterPro" id="IPR006689">
    <property type="entry name" value="Small_GTPase_ARF/SAR"/>
</dbReference>
<dbReference type="InterPro" id="IPR006687">
    <property type="entry name" value="Small_GTPase_SAR1"/>
</dbReference>
<dbReference type="NCBIfam" id="TIGR00231">
    <property type="entry name" value="small_GTP"/>
    <property type="match status" value="1"/>
</dbReference>
<dbReference type="PANTHER" id="PTHR45684">
    <property type="entry name" value="RE74312P"/>
    <property type="match status" value="1"/>
</dbReference>
<dbReference type="Pfam" id="PF00025">
    <property type="entry name" value="Arf"/>
    <property type="match status" value="1"/>
</dbReference>
<dbReference type="PRINTS" id="PR00328">
    <property type="entry name" value="SAR1GTPBP"/>
</dbReference>
<dbReference type="SMART" id="SM00177">
    <property type="entry name" value="ARF"/>
    <property type="match status" value="1"/>
</dbReference>
<dbReference type="SMART" id="SM00178">
    <property type="entry name" value="SAR"/>
    <property type="match status" value="1"/>
</dbReference>
<dbReference type="SUPFAM" id="SSF52540">
    <property type="entry name" value="P-loop containing nucleoside triphosphate hydrolases"/>
    <property type="match status" value="1"/>
</dbReference>
<dbReference type="PROSITE" id="PS51422">
    <property type="entry name" value="SAR1"/>
    <property type="match status" value="1"/>
</dbReference>